<evidence type="ECO:0000255" key="1">
    <source>
        <dbReference type="HAMAP-Rule" id="MF_00631"/>
    </source>
</evidence>
<evidence type="ECO:0000305" key="2"/>
<comment type="function">
    <text evidence="1">Involved in cell division.</text>
</comment>
<comment type="subcellular location">
    <subcellularLocation>
        <location evidence="1">Cell membrane</location>
        <topology evidence="1">Multi-pass membrane protein</topology>
    </subcellularLocation>
</comment>
<comment type="similarity">
    <text evidence="1">Belongs to the CrgA family.</text>
</comment>
<comment type="sequence caution" evidence="2">
    <conflict type="erroneous initiation">
        <sequence resource="EMBL-CDS" id="AAN24417"/>
    </conflict>
</comment>
<keyword id="KW-0131">Cell cycle</keyword>
<keyword id="KW-0132">Cell division</keyword>
<keyword id="KW-1003">Cell membrane</keyword>
<keyword id="KW-0472">Membrane</keyword>
<keyword id="KW-1185">Reference proteome</keyword>
<keyword id="KW-0812">Transmembrane</keyword>
<keyword id="KW-1133">Transmembrane helix</keyword>
<organism>
    <name type="scientific">Bifidobacterium longum (strain NCC 2705)</name>
    <dbReference type="NCBI Taxonomy" id="206672"/>
    <lineage>
        <taxon>Bacteria</taxon>
        <taxon>Bacillati</taxon>
        <taxon>Actinomycetota</taxon>
        <taxon>Actinomycetes</taxon>
        <taxon>Bifidobacteriales</taxon>
        <taxon>Bifidobacteriaceae</taxon>
        <taxon>Bifidobacterium</taxon>
    </lineage>
</organism>
<sequence>MEQVQAALNATADKATLTPQMQRMMNRQAENTKRVEETIKGTKSNPRWFVPLFCALMIIGLIWCVVYYLSPSGSWPIPNIGAWNLGIGFALIMIGFLMTMGWR</sequence>
<feature type="chain" id="PRO_0000216810" description="Cell division protein CrgA">
    <location>
        <begin position="1"/>
        <end position="103"/>
    </location>
</feature>
<feature type="transmembrane region" description="Helical" evidence="1">
    <location>
        <begin position="49"/>
        <end position="69"/>
    </location>
</feature>
<feature type="transmembrane region" description="Helical" evidence="1">
    <location>
        <begin position="80"/>
        <end position="100"/>
    </location>
</feature>
<reference key="1">
    <citation type="journal article" date="2002" name="Proc. Natl. Acad. Sci. U.S.A.">
        <title>The genome sequence of Bifidobacterium longum reflects its adaptation to the human gastrointestinal tract.</title>
        <authorList>
            <person name="Schell M.A."/>
            <person name="Karmirantzou M."/>
            <person name="Snel B."/>
            <person name="Vilanova D."/>
            <person name="Berger B."/>
            <person name="Pessi G."/>
            <person name="Zwahlen M.-C."/>
            <person name="Desiere F."/>
            <person name="Bork P."/>
            <person name="Delley M."/>
            <person name="Pridmore R.D."/>
            <person name="Arigoni F."/>
        </authorList>
    </citation>
    <scope>NUCLEOTIDE SEQUENCE [LARGE SCALE GENOMIC DNA]</scope>
    <source>
        <strain>NCC 2705</strain>
    </source>
</reference>
<name>CRGA_BIFLO</name>
<dbReference type="EMBL" id="AE014295">
    <property type="protein sequence ID" value="AAN24417.1"/>
    <property type="status" value="ALT_INIT"/>
    <property type="molecule type" value="Genomic_DNA"/>
</dbReference>
<dbReference type="RefSeq" id="NP_695781.1">
    <property type="nucleotide sequence ID" value="NC_004307.2"/>
</dbReference>
<dbReference type="SMR" id="Q8G6P5"/>
<dbReference type="STRING" id="206672.BL0593"/>
<dbReference type="EnsemblBacteria" id="AAN24417">
    <property type="protein sequence ID" value="AAN24417"/>
    <property type="gene ID" value="BL0593"/>
</dbReference>
<dbReference type="KEGG" id="blo:BL0593"/>
<dbReference type="PATRIC" id="fig|206672.9.peg.1333"/>
<dbReference type="HOGENOM" id="CLU_109805_1_0_11"/>
<dbReference type="OrthoDB" id="5189646at2"/>
<dbReference type="Proteomes" id="UP000000439">
    <property type="component" value="Chromosome"/>
</dbReference>
<dbReference type="GO" id="GO:0005886">
    <property type="term" value="C:plasma membrane"/>
    <property type="evidence" value="ECO:0007669"/>
    <property type="project" value="UniProtKB-SubCell"/>
</dbReference>
<dbReference type="GO" id="GO:0051301">
    <property type="term" value="P:cell division"/>
    <property type="evidence" value="ECO:0007669"/>
    <property type="project" value="UniProtKB-UniRule"/>
</dbReference>
<dbReference type="HAMAP" id="MF_00631">
    <property type="entry name" value="CrgA"/>
    <property type="match status" value="1"/>
</dbReference>
<dbReference type="InterPro" id="IPR009619">
    <property type="entry name" value="CrgA"/>
</dbReference>
<dbReference type="NCBIfam" id="NF002593">
    <property type="entry name" value="PRK02251.1-2"/>
    <property type="match status" value="1"/>
</dbReference>
<dbReference type="Pfam" id="PF06781">
    <property type="entry name" value="CrgA"/>
    <property type="match status" value="1"/>
</dbReference>
<accession>Q8G6P5</accession>
<protein>
    <recommendedName>
        <fullName evidence="1">Cell division protein CrgA</fullName>
    </recommendedName>
</protein>
<proteinExistence type="inferred from homology"/>
<gene>
    <name evidence="1" type="primary">crgA</name>
    <name type="ordered locus">BL0593</name>
</gene>